<accession>Q63768</accession>
<reference key="1">
    <citation type="journal article" date="1996" name="Proc. Natl. Acad. Sci. U.S.A.">
        <title>CrkII signals from epidermal growth factor receptor to Ras.</title>
        <authorList>
            <person name="Kizaka-Kondoh S."/>
            <person name="Matsuda M."/>
            <person name="Okayama H."/>
        </authorList>
    </citation>
    <scope>NUCLEOTIDE SEQUENCE [MRNA]</scope>
    <source>
        <tissue>Kidney</tissue>
    </source>
</reference>
<reference key="2">
    <citation type="journal article" date="2002" name="EMBO J.">
        <title>Tyrosine 221 in Crk regulates adhesion-dependent membrane localization of Crk and Rac and activation of Rac signaling.</title>
        <authorList>
            <person name="Abassi Y.A."/>
            <person name="Vuori K."/>
        </authorList>
    </citation>
    <scope>PHOSPHORYLATION AT TYR-221</scope>
    <scope>MUTAGENESIS OF TYR-221</scope>
</reference>
<reference key="3">
    <citation type="journal article" date="2012" name="Nat. Commun.">
        <title>Quantitative maps of protein phosphorylation sites across 14 different rat organs and tissues.</title>
        <authorList>
            <person name="Lundby A."/>
            <person name="Secher A."/>
            <person name="Lage K."/>
            <person name="Nordsborg N.B."/>
            <person name="Dmytriyev A."/>
            <person name="Lundby C."/>
            <person name="Olsen J.V."/>
        </authorList>
    </citation>
    <scope>IDENTIFICATION BY MASS SPECTROMETRY [LARGE SCALE ANALYSIS]</scope>
</reference>
<organism>
    <name type="scientific">Rattus norvegicus</name>
    <name type="common">Rat</name>
    <dbReference type="NCBI Taxonomy" id="10116"/>
    <lineage>
        <taxon>Eukaryota</taxon>
        <taxon>Metazoa</taxon>
        <taxon>Chordata</taxon>
        <taxon>Craniata</taxon>
        <taxon>Vertebrata</taxon>
        <taxon>Euteleostomi</taxon>
        <taxon>Mammalia</taxon>
        <taxon>Eutheria</taxon>
        <taxon>Euarchontoglires</taxon>
        <taxon>Glires</taxon>
        <taxon>Rodentia</taxon>
        <taxon>Myomorpha</taxon>
        <taxon>Muroidea</taxon>
        <taxon>Muridae</taxon>
        <taxon>Murinae</taxon>
        <taxon>Rattus</taxon>
    </lineage>
</organism>
<name>CRK_RAT</name>
<evidence type="ECO:0000250" key="1"/>
<evidence type="ECO:0000250" key="2">
    <source>
        <dbReference type="UniProtKB" id="P46108"/>
    </source>
</evidence>
<evidence type="ECO:0000250" key="3">
    <source>
        <dbReference type="UniProtKB" id="Q64010"/>
    </source>
</evidence>
<evidence type="ECO:0000255" key="4">
    <source>
        <dbReference type="PROSITE-ProRule" id="PRU00191"/>
    </source>
</evidence>
<evidence type="ECO:0000255" key="5">
    <source>
        <dbReference type="PROSITE-ProRule" id="PRU00192"/>
    </source>
</evidence>
<evidence type="ECO:0000256" key="6">
    <source>
        <dbReference type="SAM" id="MobiDB-lite"/>
    </source>
</evidence>
<evidence type="ECO:0000269" key="7">
    <source>
    </source>
</evidence>
<evidence type="ECO:0000305" key="8"/>
<proteinExistence type="evidence at protein level"/>
<keyword id="KW-0007">Acetylation</keyword>
<keyword id="KW-0025">Alternative splicing</keyword>
<keyword id="KW-1003">Cell membrane</keyword>
<keyword id="KW-0963">Cytoplasm</keyword>
<keyword id="KW-0472">Membrane</keyword>
<keyword id="KW-0597">Phosphoprotein</keyword>
<keyword id="KW-0656">Proto-oncogene</keyword>
<keyword id="KW-1185">Reference proteome</keyword>
<keyword id="KW-0677">Repeat</keyword>
<keyword id="KW-0727">SH2 domain</keyword>
<keyword id="KW-0728">SH3 domain</keyword>
<protein>
    <recommendedName>
        <fullName>Adapter molecule crk</fullName>
    </recommendedName>
    <alternativeName>
        <fullName>Proto-oncogene c-Crk</fullName>
    </alternativeName>
    <alternativeName>
        <fullName>p38</fullName>
    </alternativeName>
</protein>
<comment type="function">
    <text evidence="2">Involved in cell branching and adhesion mediated by BCAR1-CRK-RAPGEF1 signaling and activation of RAP1.</text>
</comment>
<comment type="function">
    <molecule>Isoform Crk-II</molecule>
    <text evidence="2 3">Regulates cell adhesion, spreading and migration. Mediates attachment-induced MAPK8 activation, membrane ruffling and cell motility in a Rac-dependent manner. Involved in phagocytosis of apoptotic cells and cell motility via its interaction with DOCK1 and DOCK4 (By similarity). May regulate the EFNA5-EPHA3 signaling (By similarity).</text>
</comment>
<comment type="subunit">
    <text evidence="1 2">Component of a complex comprised of SH2D3C, BCAR1/CAS, and CRK (By similarity). Within the complex, interacts with SH2D3C (via C-terminus), and BCAR1/CAS (By similarity). Found in a complex with ABL1, ABL2, CRK and UNC119; leading to the inhibition of CRK phosphorylation by ABL kinases (By similarity). Interacts with ABL1, C3G, DOCK3, DOCK5, MAP4K1, MAPK8 and SOS via its first SH3 domain. Interacts (via SH2 domain) with BCAR1, CBL, CBLB, PXN, IRS4 and GAB1 upon stimulus-induced tyrosine phosphorylation. Interacts (via SH2 domain) with several tyrosine-phosphorylated growth factor receptors such as EGFR and INSR. Interacts with FLT1 (tyrosine-phosphorylated). Interacts with DOCK1 and DOCK4. Interacts with SHB. Interacts with PEAK1. Interacts with FASLG. Isoform Crk-II interacts with KIT. Interacts with EPHA3; upon activation of EPHA3 by the ligand EFNA5 and EPHA3 tyrosine kinase activity-dependent. Interacts with EPHA3 (phosphorylated); mediates EFNA5-EPHA3 signaling through RHOA GTPase activation. Interacts with FLT4 (tyrosine-phosphorylated). Isoform Crk-II (via SH2 domain) interacts with PDGFRA (tyrosine phosphorylated) and PDGFRB (tyrosine phosphorylated). Part of a collagen stimulated complex involved in cell migration composed of CDC42, CRK, TNK2 and p130cas/BCAR1. Interacts (via SH2 domain) with the 'Tyr-9' phosphorylated form of PDPK1. Interacts with CBLC (By similarity).</text>
</comment>
<comment type="interaction">
    <interactant intactId="EBI-8423843">
        <id>Q63768</id>
    </interactant>
    <interactant intactId="EBI-968788">
        <id>P18031</id>
        <label>PTPN1</label>
    </interactant>
    <organismsDiffer>true</organismsDiffer>
    <experiments>2</experiments>
</comment>
<comment type="subcellular location">
    <subcellularLocation>
        <location>Cytoplasm</location>
    </subcellularLocation>
    <subcellularLocation>
        <location>Cell membrane</location>
    </subcellularLocation>
    <text>Translocated to the plasma membrane upon cell adhesion.</text>
</comment>
<comment type="alternative products">
    <event type="alternative splicing"/>
    <isoform>
        <id>Q63768-1</id>
        <name>Crk-II</name>
        <sequence type="displayed"/>
    </isoform>
    <isoform>
        <id>Q63768-2</id>
        <name>Crk-I</name>
        <sequence type="described" ref="VSP_004175"/>
    </isoform>
</comment>
<comment type="tissue specificity">
    <text>CRK-II is expressed in all tissues and cells whereas CRK-I is expressed at lower level and in limited cell-types.</text>
</comment>
<comment type="domain">
    <text evidence="1">The C-terminal SH3 domain function as a negative modulator for transformation and the N-terminal SH3 domain appears to function as a positive regulator for transformation.</text>
</comment>
<comment type="domain">
    <text evidence="1">The SH2 domain mediates interaction with tyrosine phosphorylated proteins. Mediates interaction with SHB (By similarity).</text>
</comment>
<comment type="PTM">
    <text evidence="2 7">Phosphorylated on Tyr-221 upon cell adhesion. Results in the negative regulation of the association with SH2- and SH3-binding partners, possibly by the formation of an intramolecular interaction of phosphorylated Tyr-221 with the SH2 domain. This leads finally to the down-regulation of the Crk signaling pathway (PubMed:12198159). Isoform Crk-II: Phosphorylated by KIT (By similarity).</text>
</comment>
<comment type="PTM">
    <text evidence="1">Proline isomerization at Pro-237 by PPIA acts as a switch between two conformations: an autoinhibitory conformation in the cis form, where the tandem SH3 domains interact intramolecularly, and an activated conformation in the trans form.</text>
</comment>
<comment type="similarity">
    <text evidence="8">Belongs to the CRK family.</text>
</comment>
<feature type="initiator methionine" description="Removed" evidence="2">
    <location>
        <position position="1"/>
    </location>
</feature>
<feature type="chain" id="PRO_0000079353" description="Adapter molecule crk">
    <location>
        <begin position="2"/>
        <end position="304"/>
    </location>
</feature>
<feature type="domain" description="SH2" evidence="4">
    <location>
        <begin position="13"/>
        <end position="118"/>
    </location>
</feature>
<feature type="domain" description="SH3 1" evidence="5">
    <location>
        <begin position="132"/>
        <end position="192"/>
    </location>
</feature>
<feature type="domain" description="SH3 2" evidence="5">
    <location>
        <begin position="235"/>
        <end position="296"/>
    </location>
</feature>
<feature type="region of interest" description="Disordered" evidence="6">
    <location>
        <begin position="61"/>
        <end position="85"/>
    </location>
</feature>
<feature type="region of interest" description="Disordered" evidence="6">
    <location>
        <begin position="201"/>
        <end position="229"/>
    </location>
</feature>
<feature type="compositionally biased region" description="Pro residues" evidence="6">
    <location>
        <begin position="67"/>
        <end position="82"/>
    </location>
</feature>
<feature type="site" description="Proline switch" evidence="1">
    <location>
        <position position="237"/>
    </location>
</feature>
<feature type="modified residue" description="N-acetylalanine" evidence="2">
    <location>
        <position position="2"/>
    </location>
</feature>
<feature type="modified residue" description="Phosphoserine" evidence="2">
    <location>
        <position position="40"/>
    </location>
</feature>
<feature type="modified residue" description="Phosphoserine" evidence="2">
    <location>
        <position position="41"/>
    </location>
</feature>
<feature type="modified residue" description="Phosphoserine" evidence="2">
    <location>
        <position position="74"/>
    </location>
</feature>
<feature type="modified residue" description="Phosphoserine" evidence="2">
    <location>
        <position position="83"/>
    </location>
</feature>
<feature type="modified residue" description="Phosphotyrosine" evidence="2">
    <location>
        <position position="108"/>
    </location>
</feature>
<feature type="modified residue" description="Phosphoserine" evidence="2">
    <location>
        <position position="125"/>
    </location>
</feature>
<feature type="modified residue" description="Phosphotyrosine; by ABL1" evidence="7">
    <location>
        <position position="221"/>
    </location>
</feature>
<feature type="modified residue" description="Phosphotyrosine" evidence="2">
    <location>
        <position position="239"/>
    </location>
</feature>
<feature type="splice variant" id="VSP_004175" description="In isoform Crk-I." evidence="8">
    <location>
        <begin position="205"/>
        <end position="304"/>
    </location>
</feature>
<feature type="sequence variant" description="In NRK-23 inactive mutant.">
    <original>Q</original>
    <variation>R</variation>
    <location>
        <position position="244"/>
    </location>
</feature>
<feature type="sequence variant" description="In NRK-23 inactive mutant.">
    <original>K</original>
    <variation>E</variation>
    <location>
        <position position="253"/>
    </location>
</feature>
<feature type="mutagenesis site" description="No activation of Rac signaling." evidence="7">
    <original>Y</original>
    <variation>F</variation>
    <location>
        <position position="221"/>
    </location>
</feature>
<gene>
    <name type="primary">Crk</name>
    <name type="synonym">Crko</name>
</gene>
<dbReference type="EMBL" id="D44481">
    <property type="protein sequence ID" value="BAA07924.1"/>
    <property type="molecule type" value="mRNA"/>
</dbReference>
<dbReference type="RefSeq" id="NP_062175.1">
    <molecule id="Q63768-1"/>
    <property type="nucleotide sequence ID" value="NM_019302.1"/>
</dbReference>
<dbReference type="BMRB" id="Q63768"/>
<dbReference type="SMR" id="Q63768"/>
<dbReference type="BioGRID" id="248468">
    <property type="interactions" value="4"/>
</dbReference>
<dbReference type="CORUM" id="Q63768"/>
<dbReference type="FunCoup" id="Q63768">
    <property type="interactions" value="3783"/>
</dbReference>
<dbReference type="IntAct" id="Q63768">
    <property type="interactions" value="12"/>
</dbReference>
<dbReference type="MINT" id="Q63768"/>
<dbReference type="STRING" id="10116.ENSRNOP00000006407"/>
<dbReference type="iPTMnet" id="Q63768"/>
<dbReference type="PhosphoSitePlus" id="Q63768"/>
<dbReference type="jPOST" id="Q63768"/>
<dbReference type="PaxDb" id="10116-ENSRNOP00000006407"/>
<dbReference type="Ensembl" id="ENSRNOT00000006407.5">
    <molecule id="Q63768-1"/>
    <property type="protein sequence ID" value="ENSRNOP00000006407.2"/>
    <property type="gene ID" value="ENSRNOG00000025792.5"/>
</dbReference>
<dbReference type="GeneID" id="54245"/>
<dbReference type="KEGG" id="rno:54245"/>
<dbReference type="AGR" id="RGD:2405"/>
<dbReference type="CTD" id="1398"/>
<dbReference type="RGD" id="2405">
    <property type="gene designation" value="Crk"/>
</dbReference>
<dbReference type="eggNOG" id="KOG4792">
    <property type="taxonomic scope" value="Eukaryota"/>
</dbReference>
<dbReference type="GeneTree" id="ENSGT00820000127055"/>
<dbReference type="HOGENOM" id="CLU_060542_0_1_1"/>
<dbReference type="InParanoid" id="Q63768"/>
<dbReference type="OMA" id="SMTRQEA"/>
<dbReference type="OrthoDB" id="9204160at2759"/>
<dbReference type="PhylomeDB" id="Q63768"/>
<dbReference type="TreeFam" id="TF321436"/>
<dbReference type="Reactome" id="R-RNO-170984">
    <property type="pathway name" value="ARMS-mediated activation"/>
</dbReference>
<dbReference type="Reactome" id="R-RNO-186763">
    <property type="pathway name" value="Downstream signal transduction"/>
</dbReference>
<dbReference type="Reactome" id="R-RNO-2029482">
    <property type="pathway name" value="Regulation of actin dynamics for phagocytic cup formation"/>
</dbReference>
<dbReference type="Reactome" id="R-RNO-372708">
    <property type="pathway name" value="p130Cas linkage to MAPK signaling for integrins"/>
</dbReference>
<dbReference type="Reactome" id="R-RNO-4420097">
    <property type="pathway name" value="VEGFA-VEGFR2 Pathway"/>
</dbReference>
<dbReference type="Reactome" id="R-RNO-8849471">
    <property type="pathway name" value="PTK6 Regulates RHO GTPases, RAS GTPase and MAP kinases"/>
</dbReference>
<dbReference type="Reactome" id="R-RNO-8875555">
    <property type="pathway name" value="MET activates RAP1 and RAC1"/>
</dbReference>
<dbReference type="Reactome" id="R-RNO-8875656">
    <property type="pathway name" value="MET receptor recycling"/>
</dbReference>
<dbReference type="Reactome" id="R-RNO-912631">
    <property type="pathway name" value="Regulation of signaling by CBL"/>
</dbReference>
<dbReference type="PRO" id="PR:Q63768"/>
<dbReference type="Proteomes" id="UP000002494">
    <property type="component" value="Chromosome 10"/>
</dbReference>
<dbReference type="Bgee" id="ENSRNOG00000025792">
    <property type="expression patterns" value="Expressed in duodenum and 19 other cell types or tissues"/>
</dbReference>
<dbReference type="GO" id="GO:0015629">
    <property type="term" value="C:actin cytoskeleton"/>
    <property type="evidence" value="ECO:0000266"/>
    <property type="project" value="RGD"/>
</dbReference>
<dbReference type="GO" id="GO:0005737">
    <property type="term" value="C:cytoplasm"/>
    <property type="evidence" value="ECO:0000318"/>
    <property type="project" value="GO_Central"/>
</dbReference>
<dbReference type="GO" id="GO:0005829">
    <property type="term" value="C:cytosol"/>
    <property type="evidence" value="ECO:0000304"/>
    <property type="project" value="Reactome"/>
</dbReference>
<dbReference type="GO" id="GO:0016020">
    <property type="term" value="C:membrane"/>
    <property type="evidence" value="ECO:0000266"/>
    <property type="project" value="RGD"/>
</dbReference>
<dbReference type="GO" id="GO:0031594">
    <property type="term" value="C:neuromuscular junction"/>
    <property type="evidence" value="ECO:0000266"/>
    <property type="project" value="RGD"/>
</dbReference>
<dbReference type="GO" id="GO:0005886">
    <property type="term" value="C:plasma membrane"/>
    <property type="evidence" value="ECO:0007669"/>
    <property type="project" value="UniProtKB-SubCell"/>
</dbReference>
<dbReference type="GO" id="GO:0032991">
    <property type="term" value="C:protein-containing complex"/>
    <property type="evidence" value="ECO:0000266"/>
    <property type="project" value="RGD"/>
</dbReference>
<dbReference type="GO" id="GO:0008092">
    <property type="term" value="F:cytoskeletal protein binding"/>
    <property type="evidence" value="ECO:0000353"/>
    <property type="project" value="RGD"/>
</dbReference>
<dbReference type="GO" id="GO:0019899">
    <property type="term" value="F:enzyme binding"/>
    <property type="evidence" value="ECO:0000353"/>
    <property type="project" value="RGD"/>
</dbReference>
<dbReference type="GO" id="GO:0046875">
    <property type="term" value="F:ephrin receptor binding"/>
    <property type="evidence" value="ECO:0000266"/>
    <property type="project" value="RGD"/>
</dbReference>
<dbReference type="GO" id="GO:0005159">
    <property type="term" value="F:insulin-like growth factor receptor binding"/>
    <property type="evidence" value="ECO:0000353"/>
    <property type="project" value="RGD"/>
</dbReference>
<dbReference type="GO" id="GO:0019900">
    <property type="term" value="F:kinase binding"/>
    <property type="evidence" value="ECO:0000266"/>
    <property type="project" value="RGD"/>
</dbReference>
<dbReference type="GO" id="GO:0001784">
    <property type="term" value="F:phosphotyrosine residue binding"/>
    <property type="evidence" value="ECO:0000266"/>
    <property type="project" value="RGD"/>
</dbReference>
<dbReference type="GO" id="GO:0019904">
    <property type="term" value="F:protein domain specific binding"/>
    <property type="evidence" value="ECO:0000353"/>
    <property type="project" value="RGD"/>
</dbReference>
<dbReference type="GO" id="GO:0045309">
    <property type="term" value="F:protein phosphorylated amino acid binding"/>
    <property type="evidence" value="ECO:0000266"/>
    <property type="project" value="RGD"/>
</dbReference>
<dbReference type="GO" id="GO:1990782">
    <property type="term" value="F:protein tyrosine kinase binding"/>
    <property type="evidence" value="ECO:0000353"/>
    <property type="project" value="RGD"/>
</dbReference>
<dbReference type="GO" id="GO:0030674">
    <property type="term" value="F:protein-macromolecule adaptor activity"/>
    <property type="evidence" value="ECO:0000315"/>
    <property type="project" value="RGD"/>
</dbReference>
<dbReference type="GO" id="GO:0030971">
    <property type="term" value="F:receptor tyrosine kinase binding"/>
    <property type="evidence" value="ECO:0000318"/>
    <property type="project" value="GO_Central"/>
</dbReference>
<dbReference type="GO" id="GO:0097110">
    <property type="term" value="F:scaffold protein binding"/>
    <property type="evidence" value="ECO:0000353"/>
    <property type="project" value="RGD"/>
</dbReference>
<dbReference type="GO" id="GO:0042169">
    <property type="term" value="F:SH2 domain binding"/>
    <property type="evidence" value="ECO:0000266"/>
    <property type="project" value="RGD"/>
</dbReference>
<dbReference type="GO" id="GO:0017124">
    <property type="term" value="F:SH3 domain binding"/>
    <property type="evidence" value="ECO:0000266"/>
    <property type="project" value="RGD"/>
</dbReference>
<dbReference type="GO" id="GO:0035591">
    <property type="term" value="F:signaling adaptor activity"/>
    <property type="evidence" value="ECO:0000266"/>
    <property type="project" value="RGD"/>
</dbReference>
<dbReference type="GO" id="GO:0030159">
    <property type="term" value="F:signaling receptor complex adaptor activity"/>
    <property type="evidence" value="ECO:0000266"/>
    <property type="project" value="RGD"/>
</dbReference>
<dbReference type="GO" id="GO:0031625">
    <property type="term" value="F:ubiquitin protein ligase binding"/>
    <property type="evidence" value="ECO:0000266"/>
    <property type="project" value="RGD"/>
</dbReference>
<dbReference type="GO" id="GO:0030036">
    <property type="term" value="P:actin cytoskeleton organization"/>
    <property type="evidence" value="ECO:0000250"/>
    <property type="project" value="UniProtKB"/>
</dbReference>
<dbReference type="GO" id="GO:0060326">
    <property type="term" value="P:cell chemotaxis"/>
    <property type="evidence" value="ECO:0000266"/>
    <property type="project" value="RGD"/>
</dbReference>
<dbReference type="GO" id="GO:0016477">
    <property type="term" value="P:cell migration"/>
    <property type="evidence" value="ECO:0000318"/>
    <property type="project" value="GO_Central"/>
</dbReference>
<dbReference type="GO" id="GO:0008283">
    <property type="term" value="P:cell population proliferation"/>
    <property type="evidence" value="ECO:0000266"/>
    <property type="project" value="RGD"/>
</dbReference>
<dbReference type="GO" id="GO:1990859">
    <property type="term" value="P:cellular response to endothelin"/>
    <property type="evidence" value="ECO:0000353"/>
    <property type="project" value="RGD"/>
</dbReference>
<dbReference type="GO" id="GO:1990314">
    <property type="term" value="P:cellular response to insulin-like growth factor stimulus"/>
    <property type="evidence" value="ECO:0000353"/>
    <property type="project" value="RGD"/>
</dbReference>
<dbReference type="GO" id="GO:1990090">
    <property type="term" value="P:cellular response to nerve growth factor stimulus"/>
    <property type="evidence" value="ECO:0000314"/>
    <property type="project" value="RGD"/>
</dbReference>
<dbReference type="GO" id="GO:0071732">
    <property type="term" value="P:cellular response to nitric oxide"/>
    <property type="evidence" value="ECO:0000353"/>
    <property type="project" value="RGD"/>
</dbReference>
<dbReference type="GO" id="GO:0071560">
    <property type="term" value="P:cellular response to transforming growth factor beta stimulus"/>
    <property type="evidence" value="ECO:0000353"/>
    <property type="project" value="RGD"/>
</dbReference>
<dbReference type="GO" id="GO:0098749">
    <property type="term" value="P:cerebellar neuron development"/>
    <property type="evidence" value="ECO:0000266"/>
    <property type="project" value="RGD"/>
</dbReference>
<dbReference type="GO" id="GO:0021987">
    <property type="term" value="P:cerebral cortex development"/>
    <property type="evidence" value="ECO:0000266"/>
    <property type="project" value="RGD"/>
</dbReference>
<dbReference type="GO" id="GO:0016358">
    <property type="term" value="P:dendrite development"/>
    <property type="evidence" value="ECO:0000266"/>
    <property type="project" value="RGD"/>
</dbReference>
<dbReference type="GO" id="GO:0007167">
    <property type="term" value="P:enzyme-linked receptor protein signaling pathway"/>
    <property type="evidence" value="ECO:0000266"/>
    <property type="project" value="RGD"/>
</dbReference>
<dbReference type="GO" id="GO:0048013">
    <property type="term" value="P:ephrin receptor signaling pathway"/>
    <property type="evidence" value="ECO:0000250"/>
    <property type="project" value="UniProtKB"/>
</dbReference>
<dbReference type="GO" id="GO:0030010">
    <property type="term" value="P:establishment of cell polarity"/>
    <property type="evidence" value="ECO:0000266"/>
    <property type="project" value="RGD"/>
</dbReference>
<dbReference type="GO" id="GO:0035685">
    <property type="term" value="P:helper T cell diapedesis"/>
    <property type="evidence" value="ECO:0000266"/>
    <property type="project" value="RGD"/>
</dbReference>
<dbReference type="GO" id="GO:0021766">
    <property type="term" value="P:hippocampus development"/>
    <property type="evidence" value="ECO:0000266"/>
    <property type="project" value="RGD"/>
</dbReference>
<dbReference type="GO" id="GO:0006629">
    <property type="term" value="P:lipid metabolic process"/>
    <property type="evidence" value="ECO:0000266"/>
    <property type="project" value="RGD"/>
</dbReference>
<dbReference type="GO" id="GO:2000146">
    <property type="term" value="P:negative regulation of cell motility"/>
    <property type="evidence" value="ECO:0000266"/>
    <property type="project" value="RGD"/>
</dbReference>
<dbReference type="GO" id="GO:0045953">
    <property type="term" value="P:negative regulation of natural killer cell mediated cytotoxicity"/>
    <property type="evidence" value="ECO:0000315"/>
    <property type="project" value="RGD"/>
</dbReference>
<dbReference type="GO" id="GO:0061045">
    <property type="term" value="P:negative regulation of wound healing"/>
    <property type="evidence" value="ECO:0000266"/>
    <property type="project" value="RGD"/>
</dbReference>
<dbReference type="GO" id="GO:0001764">
    <property type="term" value="P:neuron migration"/>
    <property type="evidence" value="ECO:0000266"/>
    <property type="project" value="RGD"/>
</dbReference>
<dbReference type="GO" id="GO:0046330">
    <property type="term" value="P:positive regulation of JNK cascade"/>
    <property type="evidence" value="ECO:0000315"/>
    <property type="project" value="RGD"/>
</dbReference>
<dbReference type="GO" id="GO:0035022">
    <property type="term" value="P:positive regulation of Rac protein signal transduction"/>
    <property type="evidence" value="ECO:0000266"/>
    <property type="project" value="RGD"/>
</dbReference>
<dbReference type="GO" id="GO:1904395">
    <property type="term" value="P:positive regulation of skeletal muscle acetylcholine-gated channel clustering"/>
    <property type="evidence" value="ECO:0000266"/>
    <property type="project" value="RGD"/>
</dbReference>
<dbReference type="GO" id="GO:0014911">
    <property type="term" value="P:positive regulation of smooth muscle cell migration"/>
    <property type="evidence" value="ECO:0000315"/>
    <property type="project" value="RGD"/>
</dbReference>
<dbReference type="GO" id="GO:1900026">
    <property type="term" value="P:positive regulation of substrate adhesion-dependent cell spreading"/>
    <property type="evidence" value="ECO:0000250"/>
    <property type="project" value="UniProtKB"/>
</dbReference>
<dbReference type="GO" id="GO:0098698">
    <property type="term" value="P:postsynaptic specialization assembly"/>
    <property type="evidence" value="ECO:0000266"/>
    <property type="project" value="RGD"/>
</dbReference>
<dbReference type="GO" id="GO:0072657">
    <property type="term" value="P:protein localization to membrane"/>
    <property type="evidence" value="ECO:0000315"/>
    <property type="project" value="RGD"/>
</dbReference>
<dbReference type="GO" id="GO:0038026">
    <property type="term" value="P:reelin-mediated signaling pathway"/>
    <property type="evidence" value="ECO:0000266"/>
    <property type="project" value="RGD"/>
</dbReference>
<dbReference type="GO" id="GO:0032956">
    <property type="term" value="P:regulation of actin cytoskeleton organization"/>
    <property type="evidence" value="ECO:0000250"/>
    <property type="project" value="UniProtKB"/>
</dbReference>
<dbReference type="GO" id="GO:0033628">
    <property type="term" value="P:regulation of cell adhesion mediated by integrin"/>
    <property type="evidence" value="ECO:0000266"/>
    <property type="project" value="RGD"/>
</dbReference>
<dbReference type="GO" id="GO:0008360">
    <property type="term" value="P:regulation of cell shape"/>
    <property type="evidence" value="ECO:0000250"/>
    <property type="project" value="UniProtKB"/>
</dbReference>
<dbReference type="GO" id="GO:0050773">
    <property type="term" value="P:regulation of dendrite development"/>
    <property type="evidence" value="ECO:0000266"/>
    <property type="project" value="RGD"/>
</dbReference>
<dbReference type="GO" id="GO:0043087">
    <property type="term" value="P:regulation of GTPase activity"/>
    <property type="evidence" value="ECO:0000250"/>
    <property type="project" value="UniProtKB"/>
</dbReference>
<dbReference type="GO" id="GO:1902531">
    <property type="term" value="P:regulation of intracellular signal transduction"/>
    <property type="evidence" value="ECO:0000266"/>
    <property type="project" value="RGD"/>
</dbReference>
<dbReference type="GO" id="GO:0002685">
    <property type="term" value="P:regulation of leukocyte migration"/>
    <property type="evidence" value="ECO:0000266"/>
    <property type="project" value="RGD"/>
</dbReference>
<dbReference type="GO" id="GO:0035020">
    <property type="term" value="P:regulation of Rac protein signal transduction"/>
    <property type="evidence" value="ECO:0000315"/>
    <property type="project" value="RGD"/>
</dbReference>
<dbReference type="GO" id="GO:0009966">
    <property type="term" value="P:regulation of signal transduction"/>
    <property type="evidence" value="ECO:0000266"/>
    <property type="project" value="RGD"/>
</dbReference>
<dbReference type="GO" id="GO:2000404">
    <property type="term" value="P:regulation of T cell migration"/>
    <property type="evidence" value="ECO:0000266"/>
    <property type="project" value="RGD"/>
</dbReference>
<dbReference type="GO" id="GO:0061847">
    <property type="term" value="P:response to cholecystokinin"/>
    <property type="evidence" value="ECO:0000314"/>
    <property type="project" value="RGD"/>
</dbReference>
<dbReference type="GO" id="GO:0035728">
    <property type="term" value="P:response to hepatocyte growth factor"/>
    <property type="evidence" value="ECO:0000353"/>
    <property type="project" value="RGD"/>
</dbReference>
<dbReference type="GO" id="GO:0042542">
    <property type="term" value="P:response to hydrogen peroxide"/>
    <property type="evidence" value="ECO:0000353"/>
    <property type="project" value="RGD"/>
</dbReference>
<dbReference type="GO" id="GO:1901652">
    <property type="term" value="P:response to peptide"/>
    <property type="evidence" value="ECO:0000353"/>
    <property type="project" value="RGD"/>
</dbReference>
<dbReference type="GO" id="GO:0001878">
    <property type="term" value="P:response to yeast"/>
    <property type="evidence" value="ECO:0000270"/>
    <property type="project" value="RGD"/>
</dbReference>
<dbReference type="CDD" id="cd09926">
    <property type="entry name" value="SH2_CRK_like"/>
    <property type="match status" value="1"/>
</dbReference>
<dbReference type="CDD" id="cd11759">
    <property type="entry name" value="SH3_CRK_C"/>
    <property type="match status" value="1"/>
</dbReference>
<dbReference type="CDD" id="cd11758">
    <property type="entry name" value="SH3_CRK_N"/>
    <property type="match status" value="1"/>
</dbReference>
<dbReference type="FunFam" id="2.30.30.40:FF:000065">
    <property type="entry name" value="adapter molecule crk isoform X1"/>
    <property type="match status" value="1"/>
</dbReference>
<dbReference type="FunFam" id="2.30.30.40:FF:000157">
    <property type="entry name" value="adapter molecule crk isoform X1"/>
    <property type="match status" value="1"/>
</dbReference>
<dbReference type="FunFam" id="3.30.505.10:FF:000026">
    <property type="entry name" value="adapter molecule crk isoform X1"/>
    <property type="match status" value="1"/>
</dbReference>
<dbReference type="Gene3D" id="3.30.505.10">
    <property type="entry name" value="SH2 domain"/>
    <property type="match status" value="1"/>
</dbReference>
<dbReference type="Gene3D" id="2.30.30.40">
    <property type="entry name" value="SH3 Domains"/>
    <property type="match status" value="2"/>
</dbReference>
<dbReference type="InterPro" id="IPR035458">
    <property type="entry name" value="CRK_SH3_C"/>
</dbReference>
<dbReference type="InterPro" id="IPR035457">
    <property type="entry name" value="CRK_SH3_N"/>
</dbReference>
<dbReference type="InterPro" id="IPR000980">
    <property type="entry name" value="SH2"/>
</dbReference>
<dbReference type="InterPro" id="IPR036860">
    <property type="entry name" value="SH2_dom_sf"/>
</dbReference>
<dbReference type="InterPro" id="IPR036028">
    <property type="entry name" value="SH3-like_dom_sf"/>
</dbReference>
<dbReference type="InterPro" id="IPR001452">
    <property type="entry name" value="SH3_domain"/>
</dbReference>
<dbReference type="InterPro" id="IPR051184">
    <property type="entry name" value="Tyrosine-phos_adapter"/>
</dbReference>
<dbReference type="PANTHER" id="PTHR19969:SF8">
    <property type="entry name" value="ADAPTER MOLECULE CRK"/>
    <property type="match status" value="1"/>
</dbReference>
<dbReference type="PANTHER" id="PTHR19969">
    <property type="entry name" value="SH2-SH3 ADAPTOR PROTEIN-RELATED"/>
    <property type="match status" value="1"/>
</dbReference>
<dbReference type="Pfam" id="PF00017">
    <property type="entry name" value="SH2"/>
    <property type="match status" value="1"/>
</dbReference>
<dbReference type="Pfam" id="PF00018">
    <property type="entry name" value="SH3_1"/>
    <property type="match status" value="1"/>
</dbReference>
<dbReference type="Pfam" id="PF07653">
    <property type="entry name" value="SH3_2"/>
    <property type="match status" value="1"/>
</dbReference>
<dbReference type="PRINTS" id="PR00401">
    <property type="entry name" value="SH2DOMAIN"/>
</dbReference>
<dbReference type="PRINTS" id="PR00452">
    <property type="entry name" value="SH3DOMAIN"/>
</dbReference>
<dbReference type="SMART" id="SM00252">
    <property type="entry name" value="SH2"/>
    <property type="match status" value="1"/>
</dbReference>
<dbReference type="SMART" id="SM00326">
    <property type="entry name" value="SH3"/>
    <property type="match status" value="2"/>
</dbReference>
<dbReference type="SUPFAM" id="SSF55550">
    <property type="entry name" value="SH2 domain"/>
    <property type="match status" value="1"/>
</dbReference>
<dbReference type="SUPFAM" id="SSF50044">
    <property type="entry name" value="SH3-domain"/>
    <property type="match status" value="2"/>
</dbReference>
<dbReference type="PROSITE" id="PS50001">
    <property type="entry name" value="SH2"/>
    <property type="match status" value="1"/>
</dbReference>
<dbReference type="PROSITE" id="PS50002">
    <property type="entry name" value="SH3"/>
    <property type="match status" value="2"/>
</dbReference>
<sequence>MAGNFDSEERSSWYWGRLSRQEAVALLQGQRHGVFLVRDSSTSPGDYVLSVSENSRVSHYIINSSGPRPPVPPSPAQPPPGVSPSRLRIGDQEFDSLPALLEFYKIHYLDTTTLIEPVSRSRQGSGVILRQEEAEYVRALFDFNGNDEEDLPFKKGDILRIRDKPEEQWWNAEDSEGKRGMIPVPYVEKYRPASASVSALIGGNQEGSHPQPLGGPEPGPYAQPSVNTPLPNLQNGPIYARVIQKRVPNAYDKTALALEVGELVKVTKINVSGQWEGECNGKRGHFPFTHVRLLDQQNPEEDFS</sequence>